<evidence type="ECO:0000255" key="1">
    <source>
        <dbReference type="HAMAP-Rule" id="MF_01210"/>
    </source>
</evidence>
<dbReference type="EC" id="6.3.4.16" evidence="1"/>
<dbReference type="EC" id="6.3.5.5" evidence="1"/>
<dbReference type="EMBL" id="AE014133">
    <property type="protein sequence ID" value="AAN58576.1"/>
    <property type="molecule type" value="Genomic_DNA"/>
</dbReference>
<dbReference type="RefSeq" id="NP_721270.1">
    <property type="nucleotide sequence ID" value="NC_004350.2"/>
</dbReference>
<dbReference type="RefSeq" id="WP_002262009.1">
    <property type="nucleotide sequence ID" value="NC_004350.2"/>
</dbReference>
<dbReference type="SMR" id="Q8DUP3"/>
<dbReference type="STRING" id="210007.SMU_860"/>
<dbReference type="KEGG" id="smu:SMU_860"/>
<dbReference type="PATRIC" id="fig|210007.7.peg.767"/>
<dbReference type="eggNOG" id="COG0458">
    <property type="taxonomic scope" value="Bacteria"/>
</dbReference>
<dbReference type="HOGENOM" id="CLU_000513_1_0_9"/>
<dbReference type="OrthoDB" id="9804197at2"/>
<dbReference type="PhylomeDB" id="Q8DUP3"/>
<dbReference type="UniPathway" id="UPA00068">
    <property type="reaction ID" value="UER00171"/>
</dbReference>
<dbReference type="UniPathway" id="UPA00070">
    <property type="reaction ID" value="UER00115"/>
</dbReference>
<dbReference type="Proteomes" id="UP000002512">
    <property type="component" value="Chromosome"/>
</dbReference>
<dbReference type="GO" id="GO:0005737">
    <property type="term" value="C:cytoplasm"/>
    <property type="evidence" value="ECO:0007669"/>
    <property type="project" value="TreeGrafter"/>
</dbReference>
<dbReference type="GO" id="GO:0005524">
    <property type="term" value="F:ATP binding"/>
    <property type="evidence" value="ECO:0007669"/>
    <property type="project" value="UniProtKB-UniRule"/>
</dbReference>
<dbReference type="GO" id="GO:0004087">
    <property type="term" value="F:carbamoyl-phosphate synthase (ammonia) activity"/>
    <property type="evidence" value="ECO:0007669"/>
    <property type="project" value="RHEA"/>
</dbReference>
<dbReference type="GO" id="GO:0004088">
    <property type="term" value="F:carbamoyl-phosphate synthase (glutamine-hydrolyzing) activity"/>
    <property type="evidence" value="ECO:0007669"/>
    <property type="project" value="UniProtKB-UniRule"/>
</dbReference>
<dbReference type="GO" id="GO:0046872">
    <property type="term" value="F:metal ion binding"/>
    <property type="evidence" value="ECO:0007669"/>
    <property type="project" value="UniProtKB-KW"/>
</dbReference>
<dbReference type="GO" id="GO:0044205">
    <property type="term" value="P:'de novo' UMP biosynthetic process"/>
    <property type="evidence" value="ECO:0007669"/>
    <property type="project" value="UniProtKB-UniRule"/>
</dbReference>
<dbReference type="GO" id="GO:0006541">
    <property type="term" value="P:glutamine metabolic process"/>
    <property type="evidence" value="ECO:0007669"/>
    <property type="project" value="TreeGrafter"/>
</dbReference>
<dbReference type="GO" id="GO:0006526">
    <property type="term" value="P:L-arginine biosynthetic process"/>
    <property type="evidence" value="ECO:0007669"/>
    <property type="project" value="UniProtKB-UniRule"/>
</dbReference>
<dbReference type="CDD" id="cd01424">
    <property type="entry name" value="MGS_CPS_II"/>
    <property type="match status" value="1"/>
</dbReference>
<dbReference type="FunFam" id="1.10.1030.10:FF:000002">
    <property type="entry name" value="Carbamoyl-phosphate synthase large chain"/>
    <property type="match status" value="1"/>
</dbReference>
<dbReference type="FunFam" id="3.30.1490.20:FF:000001">
    <property type="entry name" value="Carbamoyl-phosphate synthase large chain"/>
    <property type="match status" value="1"/>
</dbReference>
<dbReference type="FunFam" id="3.30.470.20:FF:000001">
    <property type="entry name" value="Carbamoyl-phosphate synthase large chain"/>
    <property type="match status" value="1"/>
</dbReference>
<dbReference type="FunFam" id="3.30.470.20:FF:000026">
    <property type="entry name" value="Carbamoyl-phosphate synthase large chain"/>
    <property type="match status" value="1"/>
</dbReference>
<dbReference type="FunFam" id="3.40.50.20:FF:000001">
    <property type="entry name" value="Carbamoyl-phosphate synthase large chain"/>
    <property type="match status" value="2"/>
</dbReference>
<dbReference type="Gene3D" id="3.40.50.20">
    <property type="match status" value="2"/>
</dbReference>
<dbReference type="Gene3D" id="3.30.1490.20">
    <property type="entry name" value="ATP-grasp fold, A domain"/>
    <property type="match status" value="1"/>
</dbReference>
<dbReference type="Gene3D" id="3.30.470.20">
    <property type="entry name" value="ATP-grasp fold, B domain"/>
    <property type="match status" value="2"/>
</dbReference>
<dbReference type="Gene3D" id="1.10.1030.10">
    <property type="entry name" value="Carbamoyl-phosphate synthetase, large subunit oligomerisation domain"/>
    <property type="match status" value="1"/>
</dbReference>
<dbReference type="Gene3D" id="3.40.50.1380">
    <property type="entry name" value="Methylglyoxal synthase-like domain"/>
    <property type="match status" value="1"/>
</dbReference>
<dbReference type="HAMAP" id="MF_01210_A">
    <property type="entry name" value="CPSase_L_chain_A"/>
    <property type="match status" value="1"/>
</dbReference>
<dbReference type="HAMAP" id="MF_01210_B">
    <property type="entry name" value="CPSase_L_chain_B"/>
    <property type="match status" value="1"/>
</dbReference>
<dbReference type="InterPro" id="IPR011761">
    <property type="entry name" value="ATP-grasp"/>
</dbReference>
<dbReference type="InterPro" id="IPR013815">
    <property type="entry name" value="ATP_grasp_subdomain_1"/>
</dbReference>
<dbReference type="InterPro" id="IPR006275">
    <property type="entry name" value="CarbamoylP_synth_lsu"/>
</dbReference>
<dbReference type="InterPro" id="IPR005480">
    <property type="entry name" value="CarbamoylP_synth_lsu_oligo"/>
</dbReference>
<dbReference type="InterPro" id="IPR036897">
    <property type="entry name" value="CarbamoylP_synth_lsu_oligo_sf"/>
</dbReference>
<dbReference type="InterPro" id="IPR005479">
    <property type="entry name" value="CbamoylP_synth_lsu-like_ATP-bd"/>
</dbReference>
<dbReference type="InterPro" id="IPR005483">
    <property type="entry name" value="CbamoylP_synth_lsu_CPSase_dom"/>
</dbReference>
<dbReference type="InterPro" id="IPR011607">
    <property type="entry name" value="MGS-like_dom"/>
</dbReference>
<dbReference type="InterPro" id="IPR036914">
    <property type="entry name" value="MGS-like_dom_sf"/>
</dbReference>
<dbReference type="InterPro" id="IPR033937">
    <property type="entry name" value="MGS_CPS_CarB"/>
</dbReference>
<dbReference type="InterPro" id="IPR016185">
    <property type="entry name" value="PreATP-grasp_dom_sf"/>
</dbReference>
<dbReference type="NCBIfam" id="TIGR01369">
    <property type="entry name" value="CPSaseII_lrg"/>
    <property type="match status" value="1"/>
</dbReference>
<dbReference type="NCBIfam" id="NF003671">
    <property type="entry name" value="PRK05294.1"/>
    <property type="match status" value="1"/>
</dbReference>
<dbReference type="NCBIfam" id="NF009455">
    <property type="entry name" value="PRK12815.1"/>
    <property type="match status" value="1"/>
</dbReference>
<dbReference type="PANTHER" id="PTHR11405:SF53">
    <property type="entry name" value="CARBAMOYL-PHOSPHATE SYNTHASE [AMMONIA], MITOCHONDRIAL"/>
    <property type="match status" value="1"/>
</dbReference>
<dbReference type="PANTHER" id="PTHR11405">
    <property type="entry name" value="CARBAMOYLTRANSFERASE FAMILY MEMBER"/>
    <property type="match status" value="1"/>
</dbReference>
<dbReference type="Pfam" id="PF02786">
    <property type="entry name" value="CPSase_L_D2"/>
    <property type="match status" value="2"/>
</dbReference>
<dbReference type="Pfam" id="PF02787">
    <property type="entry name" value="CPSase_L_D3"/>
    <property type="match status" value="1"/>
</dbReference>
<dbReference type="Pfam" id="PF02142">
    <property type="entry name" value="MGS"/>
    <property type="match status" value="1"/>
</dbReference>
<dbReference type="PRINTS" id="PR00098">
    <property type="entry name" value="CPSASE"/>
</dbReference>
<dbReference type="SMART" id="SM01096">
    <property type="entry name" value="CPSase_L_D3"/>
    <property type="match status" value="1"/>
</dbReference>
<dbReference type="SMART" id="SM01209">
    <property type="entry name" value="GARS_A"/>
    <property type="match status" value="1"/>
</dbReference>
<dbReference type="SMART" id="SM00851">
    <property type="entry name" value="MGS"/>
    <property type="match status" value="1"/>
</dbReference>
<dbReference type="SUPFAM" id="SSF48108">
    <property type="entry name" value="Carbamoyl phosphate synthetase, large subunit connection domain"/>
    <property type="match status" value="1"/>
</dbReference>
<dbReference type="SUPFAM" id="SSF56059">
    <property type="entry name" value="Glutathione synthetase ATP-binding domain-like"/>
    <property type="match status" value="2"/>
</dbReference>
<dbReference type="SUPFAM" id="SSF52335">
    <property type="entry name" value="Methylglyoxal synthase-like"/>
    <property type="match status" value="1"/>
</dbReference>
<dbReference type="SUPFAM" id="SSF52440">
    <property type="entry name" value="PreATP-grasp domain"/>
    <property type="match status" value="2"/>
</dbReference>
<dbReference type="PROSITE" id="PS50975">
    <property type="entry name" value="ATP_GRASP"/>
    <property type="match status" value="2"/>
</dbReference>
<dbReference type="PROSITE" id="PS00866">
    <property type="entry name" value="CPSASE_1"/>
    <property type="match status" value="2"/>
</dbReference>
<dbReference type="PROSITE" id="PS00867">
    <property type="entry name" value="CPSASE_2"/>
    <property type="match status" value="2"/>
</dbReference>
<dbReference type="PROSITE" id="PS51855">
    <property type="entry name" value="MGS"/>
    <property type="match status" value="1"/>
</dbReference>
<proteinExistence type="inferred from homology"/>
<accession>Q8DUP3</accession>
<organism>
    <name type="scientific">Streptococcus mutans serotype c (strain ATCC 700610 / UA159)</name>
    <dbReference type="NCBI Taxonomy" id="210007"/>
    <lineage>
        <taxon>Bacteria</taxon>
        <taxon>Bacillati</taxon>
        <taxon>Bacillota</taxon>
        <taxon>Bacilli</taxon>
        <taxon>Lactobacillales</taxon>
        <taxon>Streptococcaceae</taxon>
        <taxon>Streptococcus</taxon>
    </lineage>
</organism>
<sequence length="1059" mass="116047">MPKRTDIKKIMVIGSGPIIIGQAAEFDYAGTQACLALKEEGYSVVLVNSNPATIMTDKEIADKVYIEPITIEFVTRILRKERPDAILPTLGGQTGLNMAMELSRAGILDELGVELLGTKLSAIDQAEDRDLFKQLMEDLEQPIPESDIVNSVDEAVAFAAKIGYPVIVRPAFTLGGTGGGMCADEKELREIAENGLKLSPVTQCLIERSIAGFKEIEYEVMRDSADNALVVCNMENFDPVGIHTGDSIVFAPTQTLSDIENQMLRDASLKIIRALKIEGGCNVQLALDPHSFKYYVIEVNPRVSRSSALASKATGYPIAKLAAKIAVGLTLDEMINPVTGTTYAMFEPALDYVVAKIPRFPFDKFEHGERRLGTQMKATGEVMAIGRNIEESLLKACRSLEIGVYHNEMPELTNVSDDALVAKIVKAQDDRLFYLSEAIRRGYSIEELSDLTKIDLFFLDKLLHIFEIETELAAKVGDIAILKEAKHNGFADRKIADIWQMTADAVRKLRLDNKIIPVYKMVDTCAAEFESATPYFYSTYEWENESIKSEKESVIVLGSGPIRIGQGVEFDYATVHSVKAIQNAGYEAIIMNSNPETVSTDFSVSDKLYFEPLTFEDVMNVIELEQPKGVIVQFGGQTAINLAEPLSHAGVTILGTQVADLDRAEDRDLFEQALKDLNIPQPPGQTATNEEEAVASARKIGFPVLVRPSYVLGGRAMEIVESENDLRSYMRTAVKASPDHPVLVDSYLVGSECEVDAISDGKDVLIPGIMEHIERAGVHSGDSMAVYPPQTLSKEVQATIADYTKRLAIGLNCIGMMNIQFVIKDETVYVIEVNPRASRTVPFLSKVTDIPMAQIATKLILGSSLTELGYKDGLYPESQNVHVKAPVFSFTKLAKVDSLLGPEMKSTGEVMGTDSTLEKALYKAFEASYFHLPAFGNVIFTIADDTKEEALALARRFSNIGYSILATEGTAKFFAENNLEAVLVNKLGEDDDNDIPAYVRSGKVQAIINTVGNKRTFDEDGAAIRSSAIEHGVPLFTALDTADAMVRVLESRGFITQAI</sequence>
<name>CARB_STRMU</name>
<reference key="1">
    <citation type="journal article" date="2002" name="Proc. Natl. Acad. Sci. U.S.A.">
        <title>Genome sequence of Streptococcus mutans UA159, a cariogenic dental pathogen.</title>
        <authorList>
            <person name="Ajdic D.J."/>
            <person name="McShan W.M."/>
            <person name="McLaughlin R.E."/>
            <person name="Savic G."/>
            <person name="Chang J."/>
            <person name="Carson M.B."/>
            <person name="Primeaux C."/>
            <person name="Tian R."/>
            <person name="Kenton S."/>
            <person name="Jia H.G."/>
            <person name="Lin S.P."/>
            <person name="Qian Y."/>
            <person name="Li S."/>
            <person name="Zhu H."/>
            <person name="Najar F.Z."/>
            <person name="Lai H."/>
            <person name="White J."/>
            <person name="Roe B.A."/>
            <person name="Ferretti J.J."/>
        </authorList>
    </citation>
    <scope>NUCLEOTIDE SEQUENCE [LARGE SCALE GENOMIC DNA]</scope>
    <source>
        <strain>ATCC 700610 / UA159</strain>
    </source>
</reference>
<keyword id="KW-0028">Amino-acid biosynthesis</keyword>
<keyword id="KW-0055">Arginine biosynthesis</keyword>
<keyword id="KW-0067">ATP-binding</keyword>
<keyword id="KW-0436">Ligase</keyword>
<keyword id="KW-0460">Magnesium</keyword>
<keyword id="KW-0464">Manganese</keyword>
<keyword id="KW-0479">Metal-binding</keyword>
<keyword id="KW-0547">Nucleotide-binding</keyword>
<keyword id="KW-0665">Pyrimidine biosynthesis</keyword>
<keyword id="KW-1185">Reference proteome</keyword>
<keyword id="KW-0677">Repeat</keyword>
<comment type="function">
    <text evidence="1">Large subunit of the glutamine-dependent carbamoyl phosphate synthetase (CPSase). CPSase catalyzes the formation of carbamoyl phosphate from the ammonia moiety of glutamine, carbonate, and phosphate donated by ATP, constituting the first step of 2 biosynthetic pathways, one leading to arginine and/or urea and the other to pyrimidine nucleotides. The large subunit (synthetase) binds the substrates ammonia (free or transferred from glutamine from the small subunit), hydrogencarbonate and ATP and carries out an ATP-coupled ligase reaction, activating hydrogencarbonate by forming carboxy phosphate which reacts with ammonia to form carbamoyl phosphate.</text>
</comment>
<comment type="catalytic activity">
    <reaction evidence="1">
        <text>hydrogencarbonate + L-glutamine + 2 ATP + H2O = carbamoyl phosphate + L-glutamate + 2 ADP + phosphate + 2 H(+)</text>
        <dbReference type="Rhea" id="RHEA:18633"/>
        <dbReference type="ChEBI" id="CHEBI:15377"/>
        <dbReference type="ChEBI" id="CHEBI:15378"/>
        <dbReference type="ChEBI" id="CHEBI:17544"/>
        <dbReference type="ChEBI" id="CHEBI:29985"/>
        <dbReference type="ChEBI" id="CHEBI:30616"/>
        <dbReference type="ChEBI" id="CHEBI:43474"/>
        <dbReference type="ChEBI" id="CHEBI:58228"/>
        <dbReference type="ChEBI" id="CHEBI:58359"/>
        <dbReference type="ChEBI" id="CHEBI:456216"/>
        <dbReference type="EC" id="6.3.5.5"/>
    </reaction>
</comment>
<comment type="catalytic activity">
    <molecule>Carbamoyl phosphate synthase large chain</molecule>
    <reaction evidence="1">
        <text>hydrogencarbonate + NH4(+) + 2 ATP = carbamoyl phosphate + 2 ADP + phosphate + 2 H(+)</text>
        <dbReference type="Rhea" id="RHEA:18029"/>
        <dbReference type="ChEBI" id="CHEBI:15378"/>
        <dbReference type="ChEBI" id="CHEBI:17544"/>
        <dbReference type="ChEBI" id="CHEBI:28938"/>
        <dbReference type="ChEBI" id="CHEBI:30616"/>
        <dbReference type="ChEBI" id="CHEBI:43474"/>
        <dbReference type="ChEBI" id="CHEBI:58228"/>
        <dbReference type="ChEBI" id="CHEBI:456216"/>
        <dbReference type="EC" id="6.3.4.16"/>
    </reaction>
</comment>
<comment type="cofactor">
    <cofactor evidence="1">
        <name>Mg(2+)</name>
        <dbReference type="ChEBI" id="CHEBI:18420"/>
    </cofactor>
    <cofactor evidence="1">
        <name>Mn(2+)</name>
        <dbReference type="ChEBI" id="CHEBI:29035"/>
    </cofactor>
    <text evidence="1">Binds 4 Mg(2+) or Mn(2+) ions per subunit.</text>
</comment>
<comment type="pathway">
    <text evidence="1">Amino-acid biosynthesis; L-arginine biosynthesis; carbamoyl phosphate from bicarbonate: step 1/1.</text>
</comment>
<comment type="pathway">
    <text evidence="1">Pyrimidine metabolism; UMP biosynthesis via de novo pathway; (S)-dihydroorotate from bicarbonate: step 1/3.</text>
</comment>
<comment type="subunit">
    <text evidence="1">Composed of two chains; the small (or glutamine) chain promotes the hydrolysis of glutamine to ammonia, which is used by the large (or ammonia) chain to synthesize carbamoyl phosphate. Tetramer of heterodimers (alpha,beta)4.</text>
</comment>
<comment type="domain">
    <text evidence="1">The large subunit is composed of 2 ATP-grasp domains that are involved in binding the 2 ATP molecules needed for carbamoyl phosphate synthesis. The N-terminal ATP-grasp domain (referred to as the carboxyphosphate synthetic component) catalyzes the ATP-dependent phosphorylation of hydrogencarbonate to carboxyphosphate and the subsequent nucleophilic attack by ammonia to form a carbamate intermediate. The C-terminal ATP-grasp domain (referred to as the carbamoyl phosphate synthetic component) then catalyzes the phosphorylation of carbamate with the second ATP to form the end product carbamoyl phosphate. The reactive and unstable enzyme intermediates are sequentially channeled from one active site to the next through the interior of the protein over a distance of at least 96 A.</text>
</comment>
<comment type="similarity">
    <text evidence="1">Belongs to the CarB family.</text>
</comment>
<gene>
    <name evidence="1" type="primary">carB</name>
    <name type="ordered locus">SMU_860</name>
</gene>
<feature type="chain" id="PRO_1000066383" description="Carbamoyl phosphate synthase large chain">
    <location>
        <begin position="1"/>
        <end position="1059"/>
    </location>
</feature>
<feature type="domain" description="ATP-grasp 1" evidence="1">
    <location>
        <begin position="133"/>
        <end position="327"/>
    </location>
</feature>
<feature type="domain" description="ATP-grasp 2" evidence="1">
    <location>
        <begin position="671"/>
        <end position="861"/>
    </location>
</feature>
<feature type="domain" description="MGS-like" evidence="1">
    <location>
        <begin position="930"/>
        <end position="1059"/>
    </location>
</feature>
<feature type="region of interest" description="Carboxyphosphate synthetic domain" evidence="1">
    <location>
        <begin position="1"/>
        <end position="401"/>
    </location>
</feature>
<feature type="region of interest" description="Oligomerization domain" evidence="1">
    <location>
        <begin position="402"/>
        <end position="546"/>
    </location>
</feature>
<feature type="region of interest" description="Carbamoyl phosphate synthetic domain" evidence="1">
    <location>
        <begin position="547"/>
        <end position="929"/>
    </location>
</feature>
<feature type="region of interest" description="Allosteric domain" evidence="1">
    <location>
        <begin position="930"/>
        <end position="1059"/>
    </location>
</feature>
<feature type="binding site" evidence="1">
    <location>
        <position position="129"/>
    </location>
    <ligand>
        <name>ATP</name>
        <dbReference type="ChEBI" id="CHEBI:30616"/>
        <label>1</label>
    </ligand>
</feature>
<feature type="binding site" evidence="1">
    <location>
        <position position="169"/>
    </location>
    <ligand>
        <name>ATP</name>
        <dbReference type="ChEBI" id="CHEBI:30616"/>
        <label>1</label>
    </ligand>
</feature>
<feature type="binding site" evidence="1">
    <location>
        <position position="175"/>
    </location>
    <ligand>
        <name>ATP</name>
        <dbReference type="ChEBI" id="CHEBI:30616"/>
        <label>1</label>
    </ligand>
</feature>
<feature type="binding site" evidence="1">
    <location>
        <position position="176"/>
    </location>
    <ligand>
        <name>ATP</name>
        <dbReference type="ChEBI" id="CHEBI:30616"/>
        <label>1</label>
    </ligand>
</feature>
<feature type="binding site" evidence="1">
    <location>
        <position position="208"/>
    </location>
    <ligand>
        <name>ATP</name>
        <dbReference type="ChEBI" id="CHEBI:30616"/>
        <label>1</label>
    </ligand>
</feature>
<feature type="binding site" evidence="1">
    <location>
        <position position="210"/>
    </location>
    <ligand>
        <name>ATP</name>
        <dbReference type="ChEBI" id="CHEBI:30616"/>
        <label>1</label>
    </ligand>
</feature>
<feature type="binding site" evidence="1">
    <location>
        <position position="215"/>
    </location>
    <ligand>
        <name>ATP</name>
        <dbReference type="ChEBI" id="CHEBI:30616"/>
        <label>1</label>
    </ligand>
</feature>
<feature type="binding site" evidence="1">
    <location>
        <position position="241"/>
    </location>
    <ligand>
        <name>ATP</name>
        <dbReference type="ChEBI" id="CHEBI:30616"/>
        <label>1</label>
    </ligand>
</feature>
<feature type="binding site" evidence="1">
    <location>
        <position position="242"/>
    </location>
    <ligand>
        <name>ATP</name>
        <dbReference type="ChEBI" id="CHEBI:30616"/>
        <label>1</label>
    </ligand>
</feature>
<feature type="binding site" evidence="1">
    <location>
        <position position="243"/>
    </location>
    <ligand>
        <name>ATP</name>
        <dbReference type="ChEBI" id="CHEBI:30616"/>
        <label>1</label>
    </ligand>
</feature>
<feature type="binding site" evidence="1">
    <location>
        <position position="284"/>
    </location>
    <ligand>
        <name>ATP</name>
        <dbReference type="ChEBI" id="CHEBI:30616"/>
        <label>1</label>
    </ligand>
</feature>
<feature type="binding site" evidence="1">
    <location>
        <position position="284"/>
    </location>
    <ligand>
        <name>Mg(2+)</name>
        <dbReference type="ChEBI" id="CHEBI:18420"/>
        <label>1</label>
    </ligand>
</feature>
<feature type="binding site" evidence="1">
    <location>
        <position position="284"/>
    </location>
    <ligand>
        <name>Mn(2+)</name>
        <dbReference type="ChEBI" id="CHEBI:29035"/>
        <label>1</label>
    </ligand>
</feature>
<feature type="binding site" evidence="1">
    <location>
        <position position="298"/>
    </location>
    <ligand>
        <name>ATP</name>
        <dbReference type="ChEBI" id="CHEBI:30616"/>
        <label>1</label>
    </ligand>
</feature>
<feature type="binding site" evidence="1">
    <location>
        <position position="298"/>
    </location>
    <ligand>
        <name>Mg(2+)</name>
        <dbReference type="ChEBI" id="CHEBI:18420"/>
        <label>1</label>
    </ligand>
</feature>
<feature type="binding site" evidence="1">
    <location>
        <position position="298"/>
    </location>
    <ligand>
        <name>Mg(2+)</name>
        <dbReference type="ChEBI" id="CHEBI:18420"/>
        <label>2</label>
    </ligand>
</feature>
<feature type="binding site" evidence="1">
    <location>
        <position position="298"/>
    </location>
    <ligand>
        <name>Mn(2+)</name>
        <dbReference type="ChEBI" id="CHEBI:29035"/>
        <label>1</label>
    </ligand>
</feature>
<feature type="binding site" evidence="1">
    <location>
        <position position="298"/>
    </location>
    <ligand>
        <name>Mn(2+)</name>
        <dbReference type="ChEBI" id="CHEBI:29035"/>
        <label>2</label>
    </ligand>
</feature>
<feature type="binding site" evidence="1">
    <location>
        <position position="300"/>
    </location>
    <ligand>
        <name>Mg(2+)</name>
        <dbReference type="ChEBI" id="CHEBI:18420"/>
        <label>2</label>
    </ligand>
</feature>
<feature type="binding site" evidence="1">
    <location>
        <position position="300"/>
    </location>
    <ligand>
        <name>Mn(2+)</name>
        <dbReference type="ChEBI" id="CHEBI:29035"/>
        <label>2</label>
    </ligand>
</feature>
<feature type="binding site" evidence="1">
    <location>
        <position position="707"/>
    </location>
    <ligand>
        <name>ATP</name>
        <dbReference type="ChEBI" id="CHEBI:30616"/>
        <label>2</label>
    </ligand>
</feature>
<feature type="binding site" evidence="1">
    <location>
        <position position="746"/>
    </location>
    <ligand>
        <name>ATP</name>
        <dbReference type="ChEBI" id="CHEBI:30616"/>
        <label>2</label>
    </ligand>
</feature>
<feature type="binding site" evidence="1">
    <location>
        <position position="748"/>
    </location>
    <ligand>
        <name>ATP</name>
        <dbReference type="ChEBI" id="CHEBI:30616"/>
        <label>2</label>
    </ligand>
</feature>
<feature type="binding site" evidence="1">
    <location>
        <position position="752"/>
    </location>
    <ligand>
        <name>ATP</name>
        <dbReference type="ChEBI" id="CHEBI:30616"/>
        <label>2</label>
    </ligand>
</feature>
<feature type="binding site" evidence="1">
    <location>
        <position position="777"/>
    </location>
    <ligand>
        <name>ATP</name>
        <dbReference type="ChEBI" id="CHEBI:30616"/>
        <label>2</label>
    </ligand>
</feature>
<feature type="binding site" evidence="1">
    <location>
        <position position="778"/>
    </location>
    <ligand>
        <name>ATP</name>
        <dbReference type="ChEBI" id="CHEBI:30616"/>
        <label>2</label>
    </ligand>
</feature>
<feature type="binding site" evidence="1">
    <location>
        <position position="779"/>
    </location>
    <ligand>
        <name>ATP</name>
        <dbReference type="ChEBI" id="CHEBI:30616"/>
        <label>2</label>
    </ligand>
</feature>
<feature type="binding site" evidence="1">
    <location>
        <position position="780"/>
    </location>
    <ligand>
        <name>ATP</name>
        <dbReference type="ChEBI" id="CHEBI:30616"/>
        <label>2</label>
    </ligand>
</feature>
<feature type="binding site" evidence="1">
    <location>
        <position position="820"/>
    </location>
    <ligand>
        <name>ATP</name>
        <dbReference type="ChEBI" id="CHEBI:30616"/>
        <label>2</label>
    </ligand>
</feature>
<feature type="binding site" evidence="1">
    <location>
        <position position="820"/>
    </location>
    <ligand>
        <name>Mg(2+)</name>
        <dbReference type="ChEBI" id="CHEBI:18420"/>
        <label>3</label>
    </ligand>
</feature>
<feature type="binding site" evidence="1">
    <location>
        <position position="820"/>
    </location>
    <ligand>
        <name>Mn(2+)</name>
        <dbReference type="ChEBI" id="CHEBI:29035"/>
        <label>3</label>
    </ligand>
</feature>
<feature type="binding site" evidence="1">
    <location>
        <position position="832"/>
    </location>
    <ligand>
        <name>ATP</name>
        <dbReference type="ChEBI" id="CHEBI:30616"/>
        <label>2</label>
    </ligand>
</feature>
<feature type="binding site" evidence="1">
    <location>
        <position position="832"/>
    </location>
    <ligand>
        <name>Mg(2+)</name>
        <dbReference type="ChEBI" id="CHEBI:18420"/>
        <label>3</label>
    </ligand>
</feature>
<feature type="binding site" evidence="1">
    <location>
        <position position="832"/>
    </location>
    <ligand>
        <name>Mg(2+)</name>
        <dbReference type="ChEBI" id="CHEBI:18420"/>
        <label>4</label>
    </ligand>
</feature>
<feature type="binding site" evidence="1">
    <location>
        <position position="832"/>
    </location>
    <ligand>
        <name>Mn(2+)</name>
        <dbReference type="ChEBI" id="CHEBI:29035"/>
        <label>3</label>
    </ligand>
</feature>
<feature type="binding site" evidence="1">
    <location>
        <position position="832"/>
    </location>
    <ligand>
        <name>Mn(2+)</name>
        <dbReference type="ChEBI" id="CHEBI:29035"/>
        <label>4</label>
    </ligand>
</feature>
<feature type="binding site" evidence="1">
    <location>
        <position position="834"/>
    </location>
    <ligand>
        <name>Mg(2+)</name>
        <dbReference type="ChEBI" id="CHEBI:18420"/>
        <label>4</label>
    </ligand>
</feature>
<feature type="binding site" evidence="1">
    <location>
        <position position="834"/>
    </location>
    <ligand>
        <name>Mn(2+)</name>
        <dbReference type="ChEBI" id="CHEBI:29035"/>
        <label>4</label>
    </ligand>
</feature>
<protein>
    <recommendedName>
        <fullName evidence="1">Carbamoyl phosphate synthase large chain</fullName>
        <ecNumber evidence="1">6.3.4.16</ecNumber>
        <ecNumber evidence="1">6.3.5.5</ecNumber>
    </recommendedName>
    <alternativeName>
        <fullName evidence="1">Carbamoyl phosphate synthetase ammonia chain</fullName>
    </alternativeName>
</protein>